<reference key="1">
    <citation type="submission" date="2005-06" db="EMBL/GenBank/DDBJ databases">
        <title>DNA sequences of macaque genes expressed in brain or testis and its evolutionary implications.</title>
        <authorList>
            <consortium name="International consortium for macaque cDNA sequencing and analysis"/>
        </authorList>
    </citation>
    <scope>NUCLEOTIDE SEQUENCE [LARGE SCALE MRNA]</scope>
    <source>
        <tissue>Brain cortex</tissue>
    </source>
</reference>
<sequence>MPNIKIFSGSSHQDLSQKIADRLGLELGKVVTKKFSNQETCVEIGESVRGEDVYIVQSGCGEINDNLMELLIMINACKIASASRVTAVIPCFPYARQDKKDKSRAPISAKLVANMLSVAGADHIITMDLHASQIQGFFDIPVDNLYAEPAVLKWIRENISEWRNCTIVSPDAGGAKRVTSIADRLNVDFALIHKERKKANEVDRMVLVGDVKDRVAILVDDMADTCGTICHAADKLLSAGATRVYAILTHGIFSGPVISRINNACFEAVVVTNTIPQEDKMKHCSKIQVIDISMILAEAIRRTHNGESVSYLFSHVPL</sequence>
<proteinExistence type="evidence at transcript level"/>
<dbReference type="EC" id="2.7.6.1"/>
<dbReference type="EMBL" id="AB169801">
    <property type="protein sequence ID" value="BAE01882.1"/>
    <property type="molecule type" value="mRNA"/>
</dbReference>
<dbReference type="RefSeq" id="NP_001271508.1">
    <property type="nucleotide sequence ID" value="NM_001284579.1"/>
</dbReference>
<dbReference type="SMR" id="Q4R4U3"/>
<dbReference type="STRING" id="9541.ENSMFAP00000009196"/>
<dbReference type="eggNOG" id="KOG1448">
    <property type="taxonomic scope" value="Eukaryota"/>
</dbReference>
<dbReference type="UniPathway" id="UPA00087">
    <property type="reaction ID" value="UER00172"/>
</dbReference>
<dbReference type="Proteomes" id="UP000233100">
    <property type="component" value="Unplaced"/>
</dbReference>
<dbReference type="GO" id="GO:0005737">
    <property type="term" value="C:cytoplasm"/>
    <property type="evidence" value="ECO:0007669"/>
    <property type="project" value="TreeGrafter"/>
</dbReference>
<dbReference type="GO" id="GO:0002189">
    <property type="term" value="C:ribose phosphate diphosphokinase complex"/>
    <property type="evidence" value="ECO:0007669"/>
    <property type="project" value="TreeGrafter"/>
</dbReference>
<dbReference type="GO" id="GO:0005524">
    <property type="term" value="F:ATP binding"/>
    <property type="evidence" value="ECO:0000250"/>
    <property type="project" value="UniProtKB"/>
</dbReference>
<dbReference type="GO" id="GO:0016301">
    <property type="term" value="F:kinase activity"/>
    <property type="evidence" value="ECO:0007669"/>
    <property type="project" value="UniProtKB-KW"/>
</dbReference>
<dbReference type="GO" id="GO:0000287">
    <property type="term" value="F:magnesium ion binding"/>
    <property type="evidence" value="ECO:0007669"/>
    <property type="project" value="InterPro"/>
</dbReference>
<dbReference type="GO" id="GO:0042803">
    <property type="term" value="F:protein homodimerization activity"/>
    <property type="evidence" value="ECO:0000250"/>
    <property type="project" value="UniProtKB"/>
</dbReference>
<dbReference type="GO" id="GO:0004749">
    <property type="term" value="F:ribose phosphate diphosphokinase activity"/>
    <property type="evidence" value="ECO:0000250"/>
    <property type="project" value="UniProtKB"/>
</dbReference>
<dbReference type="GO" id="GO:0006015">
    <property type="term" value="P:5-phosphoribose 1-diphosphate biosynthetic process"/>
    <property type="evidence" value="ECO:0007669"/>
    <property type="project" value="UniProtKB-UniPathway"/>
</dbReference>
<dbReference type="GO" id="GO:0006164">
    <property type="term" value="P:purine nucleotide biosynthetic process"/>
    <property type="evidence" value="ECO:0007669"/>
    <property type="project" value="TreeGrafter"/>
</dbReference>
<dbReference type="GO" id="GO:0009156">
    <property type="term" value="P:ribonucleoside monophosphate biosynthetic process"/>
    <property type="evidence" value="ECO:0007669"/>
    <property type="project" value="InterPro"/>
</dbReference>
<dbReference type="CDD" id="cd06223">
    <property type="entry name" value="PRTases_typeI"/>
    <property type="match status" value="1"/>
</dbReference>
<dbReference type="FunFam" id="3.40.50.2020:FF:000031">
    <property type="entry name" value="Probable PRS4-ribose-phosphate pyrophosphokinase 3"/>
    <property type="match status" value="1"/>
</dbReference>
<dbReference type="FunFam" id="3.40.50.2020:FF:000005">
    <property type="entry name" value="Ribose-phosphate pyrophosphokinase 1"/>
    <property type="match status" value="1"/>
</dbReference>
<dbReference type="Gene3D" id="3.40.50.2020">
    <property type="match status" value="2"/>
</dbReference>
<dbReference type="HAMAP" id="MF_00583_B">
    <property type="entry name" value="RibP_PPkinase_B"/>
    <property type="match status" value="1"/>
</dbReference>
<dbReference type="InterPro" id="IPR000842">
    <property type="entry name" value="PRib_PP_synth_CS"/>
</dbReference>
<dbReference type="InterPro" id="IPR029099">
    <property type="entry name" value="Pribosyltran_N"/>
</dbReference>
<dbReference type="InterPro" id="IPR000836">
    <property type="entry name" value="PRibTrfase_dom"/>
</dbReference>
<dbReference type="InterPro" id="IPR029057">
    <property type="entry name" value="PRTase-like"/>
</dbReference>
<dbReference type="InterPro" id="IPR005946">
    <property type="entry name" value="Rib-P_diPkinase"/>
</dbReference>
<dbReference type="InterPro" id="IPR037515">
    <property type="entry name" value="Rib-P_diPkinase_bac"/>
</dbReference>
<dbReference type="NCBIfam" id="NF002320">
    <property type="entry name" value="PRK01259.1"/>
    <property type="match status" value="1"/>
</dbReference>
<dbReference type="NCBIfam" id="TIGR01251">
    <property type="entry name" value="ribP_PPkin"/>
    <property type="match status" value="1"/>
</dbReference>
<dbReference type="PANTHER" id="PTHR10210">
    <property type="entry name" value="RIBOSE-PHOSPHATE DIPHOSPHOKINASE FAMILY MEMBER"/>
    <property type="match status" value="1"/>
</dbReference>
<dbReference type="PANTHER" id="PTHR10210:SF118">
    <property type="entry name" value="RIBOSE-PHOSPHATE PYROPHOSPHOKINASE 1"/>
    <property type="match status" value="1"/>
</dbReference>
<dbReference type="Pfam" id="PF14572">
    <property type="entry name" value="Pribosyl_synth"/>
    <property type="match status" value="1"/>
</dbReference>
<dbReference type="Pfam" id="PF13793">
    <property type="entry name" value="Pribosyltran_N"/>
    <property type="match status" value="1"/>
</dbReference>
<dbReference type="SMART" id="SM01400">
    <property type="entry name" value="Pribosyltran_N"/>
    <property type="match status" value="1"/>
</dbReference>
<dbReference type="SUPFAM" id="SSF53271">
    <property type="entry name" value="PRTase-like"/>
    <property type="match status" value="1"/>
</dbReference>
<dbReference type="PROSITE" id="PS00114">
    <property type="entry name" value="PRPP_SYNTHASE"/>
    <property type="match status" value="1"/>
</dbReference>
<accession>Q4R4U3</accession>
<protein>
    <recommendedName>
        <fullName>Ribose-phosphate pyrophosphokinase 1</fullName>
        <ecNumber>2.7.6.1</ecNumber>
    </recommendedName>
    <alternativeName>
        <fullName>Phosphoribosyl pyrophosphate synthase I</fullName>
        <shortName>PRS-I</shortName>
    </alternativeName>
</protein>
<evidence type="ECO:0000250" key="1"/>
<evidence type="ECO:0000255" key="2"/>
<evidence type="ECO:0000305" key="3"/>
<name>PRPS1_MACFA</name>
<gene>
    <name type="primary">PRPS1</name>
    <name type="ORF">QccE-17140</name>
</gene>
<keyword id="KW-0067">ATP-binding</keyword>
<keyword id="KW-0418">Kinase</keyword>
<keyword id="KW-0460">Magnesium</keyword>
<keyword id="KW-0479">Metal-binding</keyword>
<keyword id="KW-0545">Nucleotide biosynthesis</keyword>
<keyword id="KW-0547">Nucleotide-binding</keyword>
<keyword id="KW-1185">Reference proteome</keyword>
<keyword id="KW-0808">Transferase</keyword>
<organism>
    <name type="scientific">Macaca fascicularis</name>
    <name type="common">Crab-eating macaque</name>
    <name type="synonym">Cynomolgus monkey</name>
    <dbReference type="NCBI Taxonomy" id="9541"/>
    <lineage>
        <taxon>Eukaryota</taxon>
        <taxon>Metazoa</taxon>
        <taxon>Chordata</taxon>
        <taxon>Craniata</taxon>
        <taxon>Vertebrata</taxon>
        <taxon>Euteleostomi</taxon>
        <taxon>Mammalia</taxon>
        <taxon>Eutheria</taxon>
        <taxon>Euarchontoglires</taxon>
        <taxon>Primates</taxon>
        <taxon>Haplorrhini</taxon>
        <taxon>Catarrhini</taxon>
        <taxon>Cercopithecidae</taxon>
        <taxon>Cercopithecinae</taxon>
        <taxon>Macaca</taxon>
    </lineage>
</organism>
<feature type="chain" id="PRO_0000294080" description="Ribose-phosphate pyrophosphokinase 1">
    <location>
        <begin position="1"/>
        <end position="318"/>
    </location>
</feature>
<feature type="region of interest" description="Binding of phosphoribosylpyrophosphate" evidence="2">
    <location>
        <begin position="212"/>
        <end position="227"/>
    </location>
</feature>
<feature type="binding site" evidence="1">
    <location>
        <begin position="96"/>
        <end position="101"/>
    </location>
    <ligand>
        <name>ATP</name>
        <dbReference type="ChEBI" id="CHEBI:30616"/>
    </ligand>
</feature>
<feature type="binding site" evidence="2">
    <location>
        <position position="128"/>
    </location>
    <ligand>
        <name>Mg(2+)</name>
        <dbReference type="ChEBI" id="CHEBI:18420"/>
    </ligand>
</feature>
<feature type="binding site" evidence="1">
    <location>
        <position position="130"/>
    </location>
    <ligand>
        <name>ATP</name>
        <dbReference type="ChEBI" id="CHEBI:30616"/>
    </ligand>
</feature>
<feature type="binding site" evidence="2">
    <location>
        <position position="130"/>
    </location>
    <ligand>
        <name>Mg(2+)</name>
        <dbReference type="ChEBI" id="CHEBI:18420"/>
    </ligand>
</feature>
<feature type="binding site" evidence="2">
    <location>
        <position position="139"/>
    </location>
    <ligand>
        <name>Mg(2+)</name>
        <dbReference type="ChEBI" id="CHEBI:18420"/>
    </ligand>
</feature>
<feature type="binding site" evidence="2">
    <location>
        <position position="143"/>
    </location>
    <ligand>
        <name>Mg(2+)</name>
        <dbReference type="ChEBI" id="CHEBI:18420"/>
    </ligand>
</feature>
<comment type="function">
    <text>Catalyzes the synthesis of phosphoribosylpyrophosphate (PRPP) that is essential for nucleotide synthesis.</text>
</comment>
<comment type="catalytic activity">
    <reaction>
        <text>D-ribose 5-phosphate + ATP = 5-phospho-alpha-D-ribose 1-diphosphate + AMP + H(+)</text>
        <dbReference type="Rhea" id="RHEA:15609"/>
        <dbReference type="ChEBI" id="CHEBI:15378"/>
        <dbReference type="ChEBI" id="CHEBI:30616"/>
        <dbReference type="ChEBI" id="CHEBI:58017"/>
        <dbReference type="ChEBI" id="CHEBI:78346"/>
        <dbReference type="ChEBI" id="CHEBI:456215"/>
        <dbReference type="EC" id="2.7.6.1"/>
    </reaction>
</comment>
<comment type="cofactor">
    <cofactor evidence="1">
        <name>Mg(2+)</name>
        <dbReference type="ChEBI" id="CHEBI:18420"/>
    </cofactor>
</comment>
<comment type="activity regulation">
    <text evidence="1">Activated by magnesium and inorganic phosphate.</text>
</comment>
<comment type="pathway">
    <text>Metabolic intermediate biosynthesis; 5-phospho-alpha-D-ribose 1-diphosphate biosynthesis; 5-phospho-alpha-D-ribose 1-diphosphate from D-ribose 5-phosphate (route I): step 1/1.</text>
</comment>
<comment type="subunit">
    <text evidence="1">Homodimer. The active form is probably a hexamer composed of 3 homodimers (By similarity).</text>
</comment>
<comment type="similarity">
    <text evidence="3">Belongs to the ribose-phosphate pyrophosphokinase family.</text>
</comment>